<organism evidence="3">
    <name type="scientific">Malva parviflora</name>
    <name type="common">Little mallow</name>
    <name type="synonym">Cheeseweed mallow</name>
    <dbReference type="NCBI Taxonomy" id="145753"/>
    <lineage>
        <taxon>Eukaryota</taxon>
        <taxon>Viridiplantae</taxon>
        <taxon>Streptophyta</taxon>
        <taxon>Embryophyta</taxon>
        <taxon>Tracheophyta</taxon>
        <taxon>Spermatophyta</taxon>
        <taxon>Magnoliopsida</taxon>
        <taxon>eudicotyledons</taxon>
        <taxon>Gunneridae</taxon>
        <taxon>Pentapetalae</taxon>
        <taxon>rosids</taxon>
        <taxon>malvids</taxon>
        <taxon>Malvales</taxon>
        <taxon>Malvaceae</taxon>
        <taxon>Malvoideae</taxon>
        <taxon>Malva</taxon>
    </lineage>
</organism>
<feature type="chain" id="PRO_0000064478" description="Antifungal protein 1 large subunit">
    <location>
        <begin position="1"/>
        <end position="15" status="greater than"/>
    </location>
</feature>
<feature type="non-terminal residue" evidence="2">
    <location>
        <position position="15"/>
    </location>
</feature>
<protein>
    <recommendedName>
        <fullName>Antifungal protein 1 large subunit</fullName>
    </recommendedName>
    <alternativeName>
        <fullName>CW-1</fullName>
    </alternativeName>
</protein>
<evidence type="ECO:0000269" key="1">
    <source>
    </source>
</evidence>
<evidence type="ECO:0000303" key="2">
    <source>
    </source>
</evidence>
<evidence type="ECO:0000305" key="3"/>
<reference evidence="3" key="1">
    <citation type="journal article" date="2000" name="Biochem. Biophys. Res. Commun.">
        <title>Potent heterologous antifungal proteins from cheeseweed (Malva parviflora).</title>
        <authorList>
            <person name="Wang X."/>
            <person name="Bunkers G.J."/>
        </authorList>
    </citation>
    <scope>PROTEIN SEQUENCE</scope>
    <scope>FUNCTION</scope>
    <source>
        <tissue>Seed</tissue>
    </source>
</reference>
<name>AFP1L_MALPA</name>
<accession>P83141</accession>
<dbReference type="GO" id="GO:0042742">
    <property type="term" value="P:defense response to bacterium"/>
    <property type="evidence" value="ECO:0007669"/>
    <property type="project" value="UniProtKB-KW"/>
</dbReference>
<dbReference type="GO" id="GO:0050832">
    <property type="term" value="P:defense response to fungus"/>
    <property type="evidence" value="ECO:0000314"/>
    <property type="project" value="UniProtKB"/>
</dbReference>
<dbReference type="GO" id="GO:0031640">
    <property type="term" value="P:killing of cells of another organism"/>
    <property type="evidence" value="ECO:0007669"/>
    <property type="project" value="UniProtKB-KW"/>
</dbReference>
<dbReference type="GO" id="GO:0006805">
    <property type="term" value="P:xenobiotic metabolic process"/>
    <property type="evidence" value="ECO:0000314"/>
    <property type="project" value="UniProtKB"/>
</dbReference>
<keyword id="KW-0044">Antibiotic</keyword>
<keyword id="KW-0929">Antimicrobial</keyword>
<keyword id="KW-0903">Direct protein sequencing</keyword>
<keyword id="KW-0295">Fungicide</keyword>
<sequence>VAGPFRIPPLRREFQ</sequence>
<proteinExistence type="evidence at protein level"/>
<comment type="function">
    <text evidence="1">Possesses antifungal activity against P.infestans but not F.graminearum.</text>
</comment>
<comment type="subunit">
    <text evidence="1">Heterodimer of a large and a small subunit.</text>
</comment>
<comment type="miscellaneous">
    <text evidence="1">Antimicrobial activity is not affected by salt concentration.</text>
</comment>